<dbReference type="EMBL" id="AB074006">
    <property type="protein sequence ID" value="BAB85686.1"/>
    <property type="molecule type" value="mRNA"/>
</dbReference>
<dbReference type="EMBL" id="AF392453">
    <property type="protein sequence ID" value="AAL40666.1"/>
    <property type="molecule type" value="mRNA"/>
</dbReference>
<dbReference type="EMBL" id="AF410430">
    <property type="protein sequence ID" value="AAK98617.1"/>
    <property type="molecule type" value="mRNA"/>
</dbReference>
<dbReference type="EMBL" id="AL136918">
    <property type="protein sequence ID" value="CAB66852.1"/>
    <property type="molecule type" value="mRNA"/>
</dbReference>
<dbReference type="EMBL" id="AK056510">
    <property type="protein sequence ID" value="BAG51735.1"/>
    <property type="molecule type" value="mRNA"/>
</dbReference>
<dbReference type="EMBL" id="AK301003">
    <property type="protein sequence ID" value="BAG62622.1"/>
    <property type="molecule type" value="mRNA"/>
</dbReference>
<dbReference type="EMBL" id="AC108448">
    <property type="status" value="NOT_ANNOTATED_CDS"/>
    <property type="molecule type" value="Genomic_DNA"/>
</dbReference>
<dbReference type="EMBL" id="KC877382">
    <property type="status" value="NOT_ANNOTATED_CDS"/>
    <property type="molecule type" value="Genomic_DNA"/>
</dbReference>
<dbReference type="EMBL" id="KF455307">
    <property type="status" value="NOT_ANNOTATED_CDS"/>
    <property type="molecule type" value="Genomic_DNA"/>
</dbReference>
<dbReference type="EMBL" id="KF455310">
    <property type="status" value="NOT_ANNOTATED_CDS"/>
    <property type="molecule type" value="Genomic_DNA"/>
</dbReference>
<dbReference type="EMBL" id="CH471158">
    <property type="protein sequence ID" value="EAX02542.1"/>
    <property type="molecule type" value="Genomic_DNA"/>
</dbReference>
<dbReference type="EMBL" id="CH471158">
    <property type="protein sequence ID" value="EAX02543.1"/>
    <property type="molecule type" value="Genomic_DNA"/>
</dbReference>
<dbReference type="EMBL" id="BC032646">
    <property type="protein sequence ID" value="AAH32646.2"/>
    <property type="molecule type" value="mRNA"/>
</dbReference>
<dbReference type="EMBL" id="BC039579">
    <property type="protein sequence ID" value="AAH39579.1"/>
    <property type="molecule type" value="mRNA"/>
</dbReference>
<dbReference type="EMBL" id="AF331964">
    <property type="protein sequence ID" value="AAG53417.1"/>
    <property type="molecule type" value="mRNA"/>
</dbReference>
<dbReference type="EMBL" id="AB040967">
    <property type="protein sequence ID" value="BAA96058.1"/>
    <property type="status" value="ALT_SEQ"/>
    <property type="molecule type" value="mRNA"/>
</dbReference>
<dbReference type="CCDS" id="CCDS31343.1">
    <molecule id="Q9H0X9-2"/>
</dbReference>
<dbReference type="CCDS" id="CCDS31344.1">
    <molecule id="Q9H0X9-1"/>
</dbReference>
<dbReference type="RefSeq" id="NP_001137535.1">
    <molecule id="Q9H0X9-2"/>
    <property type="nucleotide sequence ID" value="NM_001144063.2"/>
</dbReference>
<dbReference type="RefSeq" id="NP_065947.1">
    <molecule id="Q9H0X9-1"/>
    <property type="nucleotide sequence ID" value="NM_020896.4"/>
</dbReference>
<dbReference type="RefSeq" id="NP_663613.1">
    <molecule id="Q9H0X9-2"/>
    <property type="nucleotide sequence ID" value="NM_145638.3"/>
</dbReference>
<dbReference type="RefSeq" id="XP_011518175.1">
    <molecule id="Q9H0X9-1"/>
    <property type="nucleotide sequence ID" value="XM_011519873.4"/>
</dbReference>
<dbReference type="RefSeq" id="XP_016872652.1">
    <molecule id="Q9H0X9-1"/>
    <property type="nucleotide sequence ID" value="XM_017017163.3"/>
</dbReference>
<dbReference type="RefSeq" id="XP_054223568.1">
    <molecule id="Q9H0X9-1"/>
    <property type="nucleotide sequence ID" value="XM_054367593.1"/>
</dbReference>
<dbReference type="RefSeq" id="XP_054223569.1">
    <molecule id="Q9H0X9-1"/>
    <property type="nucleotide sequence ID" value="XM_054367594.1"/>
</dbReference>
<dbReference type="SMR" id="Q9H0X9"/>
<dbReference type="BioGRID" id="125380">
    <property type="interactions" value="64"/>
</dbReference>
<dbReference type="DIP" id="DIP-52332N"/>
<dbReference type="FunCoup" id="Q9H0X9">
    <property type="interactions" value="1144"/>
</dbReference>
<dbReference type="IntAct" id="Q9H0X9">
    <property type="interactions" value="35"/>
</dbReference>
<dbReference type="MINT" id="Q9H0X9"/>
<dbReference type="STRING" id="9606.ENSP00000263650"/>
<dbReference type="SwissLipids" id="SLP:000000527"/>
<dbReference type="TCDB" id="2.D.1.1.1">
    <property type="family name" value="the pi4p/ps counter transporter (p/p-ct) family"/>
</dbReference>
<dbReference type="GlyGen" id="Q9H0X9">
    <property type="glycosylation" value="2 sites"/>
</dbReference>
<dbReference type="iPTMnet" id="Q9H0X9"/>
<dbReference type="PhosphoSitePlus" id="Q9H0X9"/>
<dbReference type="SwissPalm" id="Q9H0X9"/>
<dbReference type="BioMuta" id="OSBPL5"/>
<dbReference type="DMDM" id="20139173"/>
<dbReference type="jPOST" id="Q9H0X9"/>
<dbReference type="MassIVE" id="Q9H0X9"/>
<dbReference type="PaxDb" id="9606-ENSP00000263650"/>
<dbReference type="PeptideAtlas" id="Q9H0X9"/>
<dbReference type="ProteomicsDB" id="5257"/>
<dbReference type="ProteomicsDB" id="80342">
    <molecule id="Q9H0X9-1"/>
</dbReference>
<dbReference type="ProteomicsDB" id="80343">
    <molecule id="Q9H0X9-2"/>
</dbReference>
<dbReference type="Pumba" id="Q9H0X9"/>
<dbReference type="Antibodypedia" id="23281">
    <property type="antibodies" value="79 antibodies from 23 providers"/>
</dbReference>
<dbReference type="DNASU" id="114879"/>
<dbReference type="Ensembl" id="ENST00000263650.12">
    <molecule id="Q9H0X9-1"/>
    <property type="protein sequence ID" value="ENSP00000263650.7"/>
    <property type="gene ID" value="ENSG00000021762.20"/>
</dbReference>
<dbReference type="Ensembl" id="ENST00000348039.9">
    <molecule id="Q9H0X9-2"/>
    <property type="protein sequence ID" value="ENSP00000302872.8"/>
    <property type="gene ID" value="ENSG00000021762.20"/>
</dbReference>
<dbReference type="Ensembl" id="ENST00000389989.7">
    <molecule id="Q9H0X9-2"/>
    <property type="protein sequence ID" value="ENSP00000374639.3"/>
    <property type="gene ID" value="ENSG00000021762.20"/>
</dbReference>
<dbReference type="Ensembl" id="ENST00000525498.5">
    <molecule id="Q9H0X9-3"/>
    <property type="protein sequence ID" value="ENSP00000433342.1"/>
    <property type="gene ID" value="ENSG00000021762.20"/>
</dbReference>
<dbReference type="GeneID" id="114879"/>
<dbReference type="KEGG" id="hsa:114879"/>
<dbReference type="MANE-Select" id="ENST00000263650.12">
    <property type="protein sequence ID" value="ENSP00000263650.7"/>
    <property type="RefSeq nucleotide sequence ID" value="NM_020896.4"/>
    <property type="RefSeq protein sequence ID" value="NP_065947.1"/>
</dbReference>
<dbReference type="UCSC" id="uc001lxk.3">
    <molecule id="Q9H0X9-1"/>
    <property type="organism name" value="human"/>
</dbReference>
<dbReference type="UCSC" id="uc010qxq.2">
    <property type="organism name" value="human"/>
</dbReference>
<dbReference type="AGR" id="HGNC:16392"/>
<dbReference type="CTD" id="114879"/>
<dbReference type="DisGeNET" id="114879"/>
<dbReference type="GeneCards" id="OSBPL5"/>
<dbReference type="HGNC" id="HGNC:16392">
    <property type="gene designation" value="OSBPL5"/>
</dbReference>
<dbReference type="HPA" id="ENSG00000021762">
    <property type="expression patterns" value="Low tissue specificity"/>
</dbReference>
<dbReference type="MIM" id="606733">
    <property type="type" value="gene"/>
</dbReference>
<dbReference type="neXtProt" id="NX_Q9H0X9"/>
<dbReference type="OpenTargets" id="ENSG00000021762"/>
<dbReference type="PharmGKB" id="PA32829"/>
<dbReference type="VEuPathDB" id="HostDB:ENSG00000021762"/>
<dbReference type="eggNOG" id="KOG2210">
    <property type="taxonomic scope" value="Eukaryota"/>
</dbReference>
<dbReference type="GeneTree" id="ENSGT00940000159535"/>
<dbReference type="HOGENOM" id="CLU_012334_2_1_1"/>
<dbReference type="InParanoid" id="Q9H0X9"/>
<dbReference type="OMA" id="ESDRCWM"/>
<dbReference type="OrthoDB" id="10053431at2759"/>
<dbReference type="PAN-GO" id="Q9H0X9">
    <property type="GO annotations" value="5 GO annotations based on evolutionary models"/>
</dbReference>
<dbReference type="PhylomeDB" id="Q9H0X9"/>
<dbReference type="TreeFam" id="TF312807"/>
<dbReference type="PathwayCommons" id="Q9H0X9"/>
<dbReference type="Reactome" id="R-HSA-1482801">
    <property type="pathway name" value="Acyl chain remodelling of PS"/>
</dbReference>
<dbReference type="SignaLink" id="Q9H0X9"/>
<dbReference type="BioGRID-ORCS" id="114879">
    <property type="hits" value="11 hits in 1154 CRISPR screens"/>
</dbReference>
<dbReference type="ChiTaRS" id="OSBPL5">
    <property type="organism name" value="human"/>
</dbReference>
<dbReference type="GeneWiki" id="OSBPL5"/>
<dbReference type="GenomeRNAi" id="114879"/>
<dbReference type="Pharos" id="Q9H0X9">
    <property type="development level" value="Tbio"/>
</dbReference>
<dbReference type="PRO" id="PR:Q9H0X9"/>
<dbReference type="Proteomes" id="UP000005640">
    <property type="component" value="Chromosome 11"/>
</dbReference>
<dbReference type="RNAct" id="Q9H0X9">
    <property type="molecule type" value="protein"/>
</dbReference>
<dbReference type="Bgee" id="ENSG00000021762">
    <property type="expression patterns" value="Expressed in pancreatic ductal cell and 184 other cell types or tissues"/>
</dbReference>
<dbReference type="ExpressionAtlas" id="Q9H0X9">
    <property type="expression patterns" value="baseline and differential"/>
</dbReference>
<dbReference type="GO" id="GO:0005829">
    <property type="term" value="C:cytosol"/>
    <property type="evidence" value="ECO:0000318"/>
    <property type="project" value="GO_Central"/>
</dbReference>
<dbReference type="GO" id="GO:0005789">
    <property type="term" value="C:endoplasmic reticulum membrane"/>
    <property type="evidence" value="ECO:0007669"/>
    <property type="project" value="UniProtKB-SubCell"/>
</dbReference>
<dbReference type="GO" id="GO:0140268">
    <property type="term" value="C:endoplasmic reticulum-plasma membrane contact site"/>
    <property type="evidence" value="ECO:0000314"/>
    <property type="project" value="UniProtKB"/>
</dbReference>
<dbReference type="GO" id="GO:0043231">
    <property type="term" value="C:intracellular membrane-bounded organelle"/>
    <property type="evidence" value="ECO:0000314"/>
    <property type="project" value="HPA"/>
</dbReference>
<dbReference type="GO" id="GO:0016020">
    <property type="term" value="C:membrane"/>
    <property type="evidence" value="ECO:0007005"/>
    <property type="project" value="UniProtKB"/>
</dbReference>
<dbReference type="GO" id="GO:0015485">
    <property type="term" value="F:cholesterol binding"/>
    <property type="evidence" value="ECO:0000314"/>
    <property type="project" value="BHF-UCL"/>
</dbReference>
<dbReference type="GO" id="GO:0008142">
    <property type="term" value="F:oxysterol binding"/>
    <property type="evidence" value="ECO:0000303"/>
    <property type="project" value="UniProtKB"/>
</dbReference>
<dbReference type="GO" id="GO:0070273">
    <property type="term" value="F:phosphatidylinositol-4-phosphate binding"/>
    <property type="evidence" value="ECO:0000314"/>
    <property type="project" value="UniProtKB"/>
</dbReference>
<dbReference type="GO" id="GO:0001786">
    <property type="term" value="F:phosphatidylserine binding"/>
    <property type="evidence" value="ECO:0000314"/>
    <property type="project" value="UniProtKB"/>
</dbReference>
<dbReference type="GO" id="GO:0140343">
    <property type="term" value="F:phosphatidylserine transfer activity"/>
    <property type="evidence" value="ECO:0000314"/>
    <property type="project" value="GO_Central"/>
</dbReference>
<dbReference type="GO" id="GO:0005548">
    <property type="term" value="F:phospholipid transporter activity"/>
    <property type="evidence" value="ECO:0000304"/>
    <property type="project" value="Reactome"/>
</dbReference>
<dbReference type="GO" id="GO:0008203">
    <property type="term" value="P:cholesterol metabolic process"/>
    <property type="evidence" value="ECO:0000303"/>
    <property type="project" value="UniProtKB"/>
</dbReference>
<dbReference type="GO" id="GO:0030301">
    <property type="term" value="P:cholesterol transport"/>
    <property type="evidence" value="ECO:0000303"/>
    <property type="project" value="UniProtKB"/>
</dbReference>
<dbReference type="GO" id="GO:0006893">
    <property type="term" value="P:Golgi to plasma membrane transport"/>
    <property type="evidence" value="ECO:0000303"/>
    <property type="project" value="UniProtKB"/>
</dbReference>
<dbReference type="GO" id="GO:0036150">
    <property type="term" value="P:phosphatidylserine acyl-chain remodeling"/>
    <property type="evidence" value="ECO:0000304"/>
    <property type="project" value="Reactome"/>
</dbReference>
<dbReference type="GO" id="GO:0015914">
    <property type="term" value="P:phospholipid transport"/>
    <property type="evidence" value="ECO:0000314"/>
    <property type="project" value="UniProtKB"/>
</dbReference>
<dbReference type="CDD" id="cd13286">
    <property type="entry name" value="PH_OPR5_ORP8"/>
    <property type="match status" value="1"/>
</dbReference>
<dbReference type="FunFam" id="1.10.287.2720:FF:000002">
    <property type="entry name" value="Oxysterol-binding protein"/>
    <property type="match status" value="1"/>
</dbReference>
<dbReference type="FunFam" id="2.30.29.30:FF:000030">
    <property type="entry name" value="Oxysterol-binding protein"/>
    <property type="match status" value="1"/>
</dbReference>
<dbReference type="FunFam" id="2.40.160.120:FF:000020">
    <property type="entry name" value="Oxysterol-binding protein"/>
    <property type="match status" value="1"/>
</dbReference>
<dbReference type="FunFam" id="3.30.70.3490:FF:000011">
    <property type="entry name" value="Oxysterol-binding protein"/>
    <property type="match status" value="1"/>
</dbReference>
<dbReference type="Gene3D" id="1.10.287.2720">
    <property type="match status" value="1"/>
</dbReference>
<dbReference type="Gene3D" id="2.40.160.120">
    <property type="match status" value="1"/>
</dbReference>
<dbReference type="Gene3D" id="3.30.70.3490">
    <property type="match status" value="1"/>
</dbReference>
<dbReference type="Gene3D" id="2.30.29.30">
    <property type="entry name" value="Pleckstrin-homology domain (PH domain)/Phosphotyrosine-binding domain (PTB)"/>
    <property type="match status" value="1"/>
</dbReference>
<dbReference type="InterPro" id="IPR037239">
    <property type="entry name" value="OSBP_sf"/>
</dbReference>
<dbReference type="InterPro" id="IPR000648">
    <property type="entry name" value="Oxysterol-bd"/>
</dbReference>
<dbReference type="InterPro" id="IPR018494">
    <property type="entry name" value="Oxysterol-bd_CS"/>
</dbReference>
<dbReference type="InterPro" id="IPR011993">
    <property type="entry name" value="PH-like_dom_sf"/>
</dbReference>
<dbReference type="InterPro" id="IPR001849">
    <property type="entry name" value="PH_domain"/>
</dbReference>
<dbReference type="PANTHER" id="PTHR10972">
    <property type="entry name" value="OXYSTEROL-BINDING PROTEIN-RELATED"/>
    <property type="match status" value="1"/>
</dbReference>
<dbReference type="PANTHER" id="PTHR10972:SF213">
    <property type="entry name" value="OXYSTEROL-BINDING PROTEIN-RELATED PROTEIN 5"/>
    <property type="match status" value="1"/>
</dbReference>
<dbReference type="Pfam" id="PF01237">
    <property type="entry name" value="Oxysterol_BP"/>
    <property type="match status" value="1"/>
</dbReference>
<dbReference type="Pfam" id="PF00169">
    <property type="entry name" value="PH"/>
    <property type="match status" value="1"/>
</dbReference>
<dbReference type="SMART" id="SM00233">
    <property type="entry name" value="PH"/>
    <property type="match status" value="1"/>
</dbReference>
<dbReference type="SUPFAM" id="SSF144000">
    <property type="entry name" value="Oxysterol-binding protein-like"/>
    <property type="match status" value="1"/>
</dbReference>
<dbReference type="SUPFAM" id="SSF50729">
    <property type="entry name" value="PH domain-like"/>
    <property type="match status" value="1"/>
</dbReference>
<dbReference type="PROSITE" id="PS01013">
    <property type="entry name" value="OSBP"/>
    <property type="match status" value="1"/>
</dbReference>
<dbReference type="PROSITE" id="PS50003">
    <property type="entry name" value="PH_DOMAIN"/>
    <property type="match status" value="1"/>
</dbReference>
<protein>
    <recommendedName>
        <fullName>Oxysterol-binding protein-related protein 5</fullName>
        <shortName>ORP-5</shortName>
        <shortName>OSBP-related protein 5</shortName>
    </recommendedName>
    <alternativeName>
        <fullName evidence="13">Oxysterol-binding protein homolog 1</fullName>
    </alternativeName>
</protein>
<name>OSBL5_HUMAN</name>
<gene>
    <name type="primary">OSBPL5</name>
    <name type="synonym">KIAA1534</name>
    <name evidence="13" type="synonym">OBPH1</name>
    <name type="synonym">ORP5</name>
</gene>
<comment type="function">
    <text evidence="7 9 10 11">Lipid transporter involved in lipid countertransport between the endoplasmic reticulum and the plasma membrane: specifically exchanges phosphatidylserine with phosphatidylinositol 4-phosphate (PI4P), delivering phosphatidylserine to the plasma membrane in exchange for PI4P, which is degraded by the SAC1/SACM1L phosphatase in the endoplasmic reticulum. Binds phosphatidylserine and PI4P in a mutually exclusive manner (PubMed:23934110, PubMed:26206935). May cooperate with NPC1 to mediate the exit of cholesterol from endosomes/lysosomes (PubMed:21220512). Binds 25-hydroxycholesterol and cholesterol (PubMed:17428193).</text>
</comment>
<comment type="subcellular location">
    <subcellularLocation>
        <location evidence="9 11">Endoplasmic reticulum membrane</location>
        <topology evidence="9">Single-pass membrane protein</topology>
    </subcellularLocation>
    <text evidence="11 12">Localizes to endoplasmic reticulum-plasma membrane contact sites (EPCS). Localizes to the cortical endoplasmic reticulum at the EPCS.</text>
</comment>
<comment type="alternative products">
    <event type="alternative splicing"/>
    <isoform>
        <id>Q9H0X9-1</id>
        <name>1</name>
        <sequence type="displayed"/>
    </isoform>
    <isoform>
        <id>Q9H0X9-2</id>
        <name>2</name>
        <sequence type="described" ref="VSP_043071"/>
    </isoform>
    <isoform>
        <id>Q9H0X9-3</id>
        <name>3</name>
        <sequence type="described" ref="VSP_057408 VSP_057409"/>
    </isoform>
</comment>
<comment type="tissue specificity">
    <text evidence="6 9">Ubiquitously expressed.</text>
</comment>
<comment type="miscellaneous">
    <text evidence="6 8">According to a report, the gene is imprinted in placenta, where it is predominantly expressed from the maternal allele only. Not imprinted in other tissues (PubMed:12504849). According to another report, it is not imprinted in trophoblast stem cells (PubMed:20644730).</text>
</comment>
<comment type="similarity">
    <text evidence="16">Belongs to the OSBP family.</text>
</comment>
<comment type="sequence caution" evidence="16">
    <conflict type="miscellaneous discrepancy">
        <sequence resource="EMBL-CDS" id="BAA96058"/>
    </conflict>
    <text>Contaminating sequence. Sequence of unknown origin in the N-terminal part.</text>
</comment>
<keyword id="KW-0025">Alternative splicing</keyword>
<keyword id="KW-0175">Coiled coil</keyword>
<keyword id="KW-0256">Endoplasmic reticulum</keyword>
<keyword id="KW-0445">Lipid transport</keyword>
<keyword id="KW-0446">Lipid-binding</keyword>
<keyword id="KW-0472">Membrane</keyword>
<keyword id="KW-0597">Phosphoprotein</keyword>
<keyword id="KW-1267">Proteomics identification</keyword>
<keyword id="KW-1185">Reference proteome</keyword>
<keyword id="KW-0812">Transmembrane</keyword>
<keyword id="KW-1133">Transmembrane helix</keyword>
<keyword id="KW-0813">Transport</keyword>
<accession>Q9H0X9</accession>
<accession>A6NDP0</accession>
<accession>A6NJS8</accession>
<accession>B4DVB0</accession>
<accession>Q54A90</accession>
<accession>Q8N596</accession>
<accession>Q9BZB0</accession>
<accession>Q9P1Z4</accession>
<organism>
    <name type="scientific">Homo sapiens</name>
    <name type="common">Human</name>
    <dbReference type="NCBI Taxonomy" id="9606"/>
    <lineage>
        <taxon>Eukaryota</taxon>
        <taxon>Metazoa</taxon>
        <taxon>Chordata</taxon>
        <taxon>Craniata</taxon>
        <taxon>Vertebrata</taxon>
        <taxon>Euteleostomi</taxon>
        <taxon>Mammalia</taxon>
        <taxon>Eutheria</taxon>
        <taxon>Euarchontoglires</taxon>
        <taxon>Primates</taxon>
        <taxon>Haplorrhini</taxon>
        <taxon>Catarrhini</taxon>
        <taxon>Hominidae</taxon>
        <taxon>Homo</taxon>
    </lineage>
</organism>
<reference key="1">
    <citation type="journal article" date="2002" name="Genomics">
        <title>Characterization and imprinting status of OBPH1/Obph1 gene: implications for an extended imprinting domain in human and mouse.</title>
        <authorList>
            <person name="Higashimoto K."/>
            <person name="Soejima H."/>
            <person name="Yatsuki H."/>
            <person name="Joh K."/>
            <person name="Uchiyama M."/>
            <person name="Obata Y."/>
            <person name="Ono R."/>
            <person name="Wang Y."/>
            <person name="Xin Z."/>
            <person name="Zhu X."/>
            <person name="Masuko S."/>
            <person name="Ishino F."/>
            <person name="Hatada I."/>
            <person name="Jinno Y."/>
            <person name="Iwasaka T."/>
            <person name="Katsuki T."/>
            <person name="Mukai T."/>
        </authorList>
    </citation>
    <scope>NUCLEOTIDE SEQUENCE [MRNA] (ISOFORM 1)</scope>
    <scope>IMPRINTING</scope>
    <scope>TISSUE SPECIFICITY</scope>
</reference>
<reference key="2">
    <citation type="journal article" date="2001" name="Genomics">
        <title>A family of 12 human genes containing oxysterol-binding domains.</title>
        <authorList>
            <person name="Jaworski C.J."/>
            <person name="Moreira E."/>
            <person name="Li A."/>
            <person name="Lee R."/>
            <person name="Rodriguez I.R."/>
        </authorList>
    </citation>
    <scope>NUCLEOTIDE SEQUENCE [MRNA] (ISOFORM 1)</scope>
</reference>
<reference key="3">
    <citation type="submission" date="2001-08" db="EMBL/GenBank/DDBJ databases">
        <title>Isolation and characterization of human oxysterol-binding protein-related protein-5 (ORP-5).</title>
        <authorList>
            <person name="Anniss A.M."/>
            <person name="Apostolopoulos J."/>
            <person name="Sparrow R.L."/>
        </authorList>
    </citation>
    <scope>NUCLEOTIDE SEQUENCE [MRNA] (ISOFORM 1)</scope>
    <source>
        <tissue>Liver</tissue>
    </source>
</reference>
<reference key="4">
    <citation type="journal article" date="2001" name="Genome Res.">
        <title>Towards a catalog of human genes and proteins: sequencing and analysis of 500 novel complete protein coding human cDNAs.</title>
        <authorList>
            <person name="Wiemann S."/>
            <person name="Weil B."/>
            <person name="Wellenreuther R."/>
            <person name="Gassenhuber J."/>
            <person name="Glassl S."/>
            <person name="Ansorge W."/>
            <person name="Boecher M."/>
            <person name="Bloecker H."/>
            <person name="Bauersachs S."/>
            <person name="Blum H."/>
            <person name="Lauber J."/>
            <person name="Duesterhoeft A."/>
            <person name="Beyer A."/>
            <person name="Koehrer K."/>
            <person name="Strack N."/>
            <person name="Mewes H.-W."/>
            <person name="Ottenwaelder B."/>
            <person name="Obermaier B."/>
            <person name="Tampe J."/>
            <person name="Heubner D."/>
            <person name="Wambutt R."/>
            <person name="Korn B."/>
            <person name="Klein M."/>
            <person name="Poustka A."/>
        </authorList>
    </citation>
    <scope>NUCLEOTIDE SEQUENCE [LARGE SCALE MRNA] (ISOFORM 1)</scope>
    <source>
        <tissue>Uterus</tissue>
    </source>
</reference>
<reference key="5">
    <citation type="journal article" date="2004" name="Nat. Genet.">
        <title>Complete sequencing and characterization of 21,243 full-length human cDNAs.</title>
        <authorList>
            <person name="Ota T."/>
            <person name="Suzuki Y."/>
            <person name="Nishikawa T."/>
            <person name="Otsuki T."/>
            <person name="Sugiyama T."/>
            <person name="Irie R."/>
            <person name="Wakamatsu A."/>
            <person name="Hayashi K."/>
            <person name="Sato H."/>
            <person name="Nagai K."/>
            <person name="Kimura K."/>
            <person name="Makita H."/>
            <person name="Sekine M."/>
            <person name="Obayashi M."/>
            <person name="Nishi T."/>
            <person name="Shibahara T."/>
            <person name="Tanaka T."/>
            <person name="Ishii S."/>
            <person name="Yamamoto J."/>
            <person name="Saito K."/>
            <person name="Kawai Y."/>
            <person name="Isono Y."/>
            <person name="Nakamura Y."/>
            <person name="Nagahari K."/>
            <person name="Murakami K."/>
            <person name="Yasuda T."/>
            <person name="Iwayanagi T."/>
            <person name="Wagatsuma M."/>
            <person name="Shiratori A."/>
            <person name="Sudo H."/>
            <person name="Hosoiri T."/>
            <person name="Kaku Y."/>
            <person name="Kodaira H."/>
            <person name="Kondo H."/>
            <person name="Sugawara M."/>
            <person name="Takahashi M."/>
            <person name="Kanda K."/>
            <person name="Yokoi T."/>
            <person name="Furuya T."/>
            <person name="Kikkawa E."/>
            <person name="Omura Y."/>
            <person name="Abe K."/>
            <person name="Kamihara K."/>
            <person name="Katsuta N."/>
            <person name="Sato K."/>
            <person name="Tanikawa M."/>
            <person name="Yamazaki M."/>
            <person name="Ninomiya K."/>
            <person name="Ishibashi T."/>
            <person name="Yamashita H."/>
            <person name="Murakawa K."/>
            <person name="Fujimori K."/>
            <person name="Tanai H."/>
            <person name="Kimata M."/>
            <person name="Watanabe M."/>
            <person name="Hiraoka S."/>
            <person name="Chiba Y."/>
            <person name="Ishida S."/>
            <person name="Ono Y."/>
            <person name="Takiguchi S."/>
            <person name="Watanabe S."/>
            <person name="Yosida M."/>
            <person name="Hotuta T."/>
            <person name="Kusano J."/>
            <person name="Kanehori K."/>
            <person name="Takahashi-Fujii A."/>
            <person name="Hara H."/>
            <person name="Tanase T.-O."/>
            <person name="Nomura Y."/>
            <person name="Togiya S."/>
            <person name="Komai F."/>
            <person name="Hara R."/>
            <person name="Takeuchi K."/>
            <person name="Arita M."/>
            <person name="Imose N."/>
            <person name="Musashino K."/>
            <person name="Yuuki H."/>
            <person name="Oshima A."/>
            <person name="Sasaki N."/>
            <person name="Aotsuka S."/>
            <person name="Yoshikawa Y."/>
            <person name="Matsunawa H."/>
            <person name="Ichihara T."/>
            <person name="Shiohata N."/>
            <person name="Sano S."/>
            <person name="Moriya S."/>
            <person name="Momiyama H."/>
            <person name="Satoh N."/>
            <person name="Takami S."/>
            <person name="Terashima Y."/>
            <person name="Suzuki O."/>
            <person name="Nakagawa S."/>
            <person name="Senoh A."/>
            <person name="Mizoguchi H."/>
            <person name="Goto Y."/>
            <person name="Shimizu F."/>
            <person name="Wakebe H."/>
            <person name="Hishigaki H."/>
            <person name="Watanabe T."/>
            <person name="Sugiyama A."/>
            <person name="Takemoto M."/>
            <person name="Kawakami B."/>
            <person name="Yamazaki M."/>
            <person name="Watanabe K."/>
            <person name="Kumagai A."/>
            <person name="Itakura S."/>
            <person name="Fukuzumi Y."/>
            <person name="Fujimori Y."/>
            <person name="Komiyama M."/>
            <person name="Tashiro H."/>
            <person name="Tanigami A."/>
            <person name="Fujiwara T."/>
            <person name="Ono T."/>
            <person name="Yamada K."/>
            <person name="Fujii Y."/>
            <person name="Ozaki K."/>
            <person name="Hirao M."/>
            <person name="Ohmori Y."/>
            <person name="Kawabata A."/>
            <person name="Hikiji T."/>
            <person name="Kobatake N."/>
            <person name="Inagaki H."/>
            <person name="Ikema Y."/>
            <person name="Okamoto S."/>
            <person name="Okitani R."/>
            <person name="Kawakami T."/>
            <person name="Noguchi S."/>
            <person name="Itoh T."/>
            <person name="Shigeta K."/>
            <person name="Senba T."/>
            <person name="Matsumura K."/>
            <person name="Nakajima Y."/>
            <person name="Mizuno T."/>
            <person name="Morinaga M."/>
            <person name="Sasaki M."/>
            <person name="Togashi T."/>
            <person name="Oyama M."/>
            <person name="Hata H."/>
            <person name="Watanabe M."/>
            <person name="Komatsu T."/>
            <person name="Mizushima-Sugano J."/>
            <person name="Satoh T."/>
            <person name="Shirai Y."/>
            <person name="Takahashi Y."/>
            <person name="Nakagawa K."/>
            <person name="Okumura K."/>
            <person name="Nagase T."/>
            <person name="Nomura N."/>
            <person name="Kikuchi H."/>
            <person name="Masuho Y."/>
            <person name="Yamashita R."/>
            <person name="Nakai K."/>
            <person name="Yada T."/>
            <person name="Nakamura Y."/>
            <person name="Ohara O."/>
            <person name="Isogai T."/>
            <person name="Sugano S."/>
        </authorList>
    </citation>
    <scope>NUCLEOTIDE SEQUENCE [LARGE SCALE MRNA] (ISOFORMS 1 AND 3)</scope>
    <source>
        <tissue>Small intestine</tissue>
        <tissue>Spleen</tissue>
    </source>
</reference>
<reference key="6">
    <citation type="journal article" date="2006" name="Nature">
        <title>Human chromosome 11 DNA sequence and analysis including novel gene identification.</title>
        <authorList>
            <person name="Taylor T.D."/>
            <person name="Noguchi H."/>
            <person name="Totoki Y."/>
            <person name="Toyoda A."/>
            <person name="Kuroki Y."/>
            <person name="Dewar K."/>
            <person name="Lloyd C."/>
            <person name="Itoh T."/>
            <person name="Takeda T."/>
            <person name="Kim D.-W."/>
            <person name="She X."/>
            <person name="Barlow K.F."/>
            <person name="Bloom T."/>
            <person name="Bruford E."/>
            <person name="Chang J.L."/>
            <person name="Cuomo C.A."/>
            <person name="Eichler E."/>
            <person name="FitzGerald M.G."/>
            <person name="Jaffe D.B."/>
            <person name="LaButti K."/>
            <person name="Nicol R."/>
            <person name="Park H.-S."/>
            <person name="Seaman C."/>
            <person name="Sougnez C."/>
            <person name="Yang X."/>
            <person name="Zimmer A.R."/>
            <person name="Zody M.C."/>
            <person name="Birren B.W."/>
            <person name="Nusbaum C."/>
            <person name="Fujiyama A."/>
            <person name="Hattori M."/>
            <person name="Rogers J."/>
            <person name="Lander E.S."/>
            <person name="Sakaki Y."/>
        </authorList>
    </citation>
    <scope>NUCLEOTIDE SEQUENCE [LARGE SCALE GENOMIC DNA]</scope>
</reference>
<reference key="7">
    <citation type="submission" date="2002-03" db="EMBL/GenBank/DDBJ databases">
        <authorList>
            <person name="Mural R.J."/>
            <person name="Istrail S."/>
            <person name="Sutton G.G."/>
            <person name="Florea L."/>
            <person name="Halpern A.L."/>
            <person name="Mobarry C.M."/>
            <person name="Lippert R."/>
            <person name="Walenz B."/>
            <person name="Shatkay H."/>
            <person name="Dew I."/>
            <person name="Miller J.R."/>
            <person name="Flanigan M.J."/>
            <person name="Edwards N.J."/>
            <person name="Bolanos R."/>
            <person name="Fasulo D."/>
            <person name="Halldorsson B.V."/>
            <person name="Hannenhalli S."/>
            <person name="Turner R."/>
            <person name="Yooseph S."/>
            <person name="Lu F."/>
            <person name="Nusskern D.R."/>
            <person name="Shue B.C."/>
            <person name="Zheng X.H."/>
            <person name="Zhong F."/>
            <person name="Delcher A.L."/>
            <person name="Huson D.H."/>
            <person name="Kravitz S.A."/>
            <person name="Mouchard L."/>
            <person name="Reinert K."/>
            <person name="Remington K.A."/>
            <person name="Clark A.G."/>
            <person name="Waterman M.S."/>
            <person name="Eichler E.E."/>
            <person name="Adams M.D."/>
            <person name="Hunkapiller M.W."/>
            <person name="Myers E.W."/>
            <person name="Venter J.C."/>
        </authorList>
    </citation>
    <scope>NUCLEOTIDE SEQUENCE [LARGE SCALE GENOMIC DNA]</scope>
</reference>
<reference key="8">
    <citation type="journal article" date="2004" name="Genome Res.">
        <title>The status, quality, and expansion of the NIH full-length cDNA project: the Mammalian Gene Collection (MGC).</title>
        <authorList>
            <consortium name="The MGC Project Team"/>
        </authorList>
    </citation>
    <scope>NUCLEOTIDE SEQUENCE [LARGE SCALE MRNA] (ISOFORMS 1 AND 2)</scope>
    <source>
        <tissue>Brain</tissue>
        <tissue>Uterus</tissue>
    </source>
</reference>
<reference key="9">
    <citation type="journal article" date="2001" name="J. Lipid Res.">
        <title>The OSBP-related protein family in humans.</title>
        <authorList>
            <person name="Lehto M."/>
            <person name="Laitinen S."/>
            <person name="Chinetti G."/>
            <person name="Johansson M."/>
            <person name="Ehnholm C."/>
            <person name="Staels B."/>
            <person name="Ikonen E."/>
            <person name="Olkkonen V.M."/>
        </authorList>
    </citation>
    <scope>NUCLEOTIDE SEQUENCE [MRNA] OF 1-61 (ISOFORM 1)</scope>
</reference>
<reference key="10">
    <citation type="journal article" date="2000" name="DNA Res.">
        <title>Prediction of the coding sequences of unidentified human genes. XVII. The complete sequences of 100 new cDNA clones from brain which code for large proteins in vitro.</title>
        <authorList>
            <person name="Nagase T."/>
            <person name="Kikuno R."/>
            <person name="Ishikawa K."/>
            <person name="Hirosawa M."/>
            <person name="Ohara O."/>
        </authorList>
    </citation>
    <scope>NUCLEOTIDE SEQUENCE [LARGE SCALE MRNA] OF 30-879 (ISOFORM 1)</scope>
    <source>
        <tissue>Brain</tissue>
    </source>
</reference>
<reference key="11">
    <citation type="journal article" date="2007" name="Biochem. J.">
        <title>The mammalian oxysterol-binding protein-related proteins (ORPs) bind 25-hydroxycholesterol in an evolutionarily conserved pocket.</title>
        <authorList>
            <person name="Suchanek M."/>
            <person name="Hynynen R."/>
            <person name="Wohlfahrt G."/>
            <person name="Lehto M."/>
            <person name="Johansson M."/>
            <person name="Saarinen H."/>
            <person name="Radzikowska A."/>
            <person name="Thiele C."/>
            <person name="Olkkonen V.M."/>
        </authorList>
    </citation>
    <scope>FUNCTION</scope>
</reference>
<reference key="12">
    <citation type="journal article" date="2008" name="Mol. Cell">
        <title>Kinase-selective enrichment enables quantitative phosphoproteomics of the kinome across the cell cycle.</title>
        <authorList>
            <person name="Daub H."/>
            <person name="Olsen J.V."/>
            <person name="Bairlein M."/>
            <person name="Gnad F."/>
            <person name="Oppermann F.S."/>
            <person name="Korner R."/>
            <person name="Greff Z."/>
            <person name="Keri G."/>
            <person name="Stemmann O."/>
            <person name="Mann M."/>
        </authorList>
    </citation>
    <scope>PHOSPHORYLATION [LARGE SCALE ANALYSIS] AT SER-747</scope>
    <scope>IDENTIFICATION BY MASS SPECTROMETRY [LARGE SCALE ANALYSIS]</scope>
    <source>
        <tissue>Cervix carcinoma</tissue>
    </source>
</reference>
<reference key="13">
    <citation type="journal article" date="2008" name="Proc. Natl. Acad. Sci. U.S.A.">
        <title>A quantitative atlas of mitotic phosphorylation.</title>
        <authorList>
            <person name="Dephoure N."/>
            <person name="Zhou C."/>
            <person name="Villen J."/>
            <person name="Beausoleil S.A."/>
            <person name="Bakalarski C.E."/>
            <person name="Elledge S.J."/>
            <person name="Gygi S.P."/>
        </authorList>
    </citation>
    <scope>PHOSPHORYLATION [LARGE SCALE ANALYSIS] AT SER-747</scope>
    <scope>IDENTIFICATION BY MASS SPECTROMETRY [LARGE SCALE ANALYSIS]</scope>
    <source>
        <tissue>Cervix carcinoma</tissue>
    </source>
</reference>
<reference key="14">
    <citation type="journal article" date="2010" name="PLoS ONE">
        <title>Telomeric NAP1L4 and OSBPL5 of the KCNQ1 cluster, and the DECORIN gene are not imprinted in human trophoblast stem cells.</title>
        <authorList>
            <person name="Frost J.M."/>
            <person name="Udayashankar R."/>
            <person name="Moore H.D."/>
            <person name="Moore G.E."/>
        </authorList>
    </citation>
    <scope>LACK OF IMPRINTING</scope>
</reference>
<reference key="15">
    <citation type="journal article" date="2010" name="Sci. Signal.">
        <title>Quantitative phosphoproteomics reveals widespread full phosphorylation site occupancy during mitosis.</title>
        <authorList>
            <person name="Olsen J.V."/>
            <person name="Vermeulen M."/>
            <person name="Santamaria A."/>
            <person name="Kumar C."/>
            <person name="Miller M.L."/>
            <person name="Jensen L.J."/>
            <person name="Gnad F."/>
            <person name="Cox J."/>
            <person name="Jensen T.S."/>
            <person name="Nigg E.A."/>
            <person name="Brunak S."/>
            <person name="Mann M."/>
        </authorList>
    </citation>
    <scope>PHOSPHORYLATION [LARGE SCALE ANALYSIS] AT SER-747</scope>
    <scope>IDENTIFICATION BY MASS SPECTROMETRY [LARGE SCALE ANALYSIS]</scope>
    <source>
        <tissue>Cervix carcinoma</tissue>
    </source>
</reference>
<reference key="16">
    <citation type="journal article" date="2011" name="J. Cell Biol.">
        <title>A role for oxysterol-binding protein-related protein 5 in endosomal cholesterol trafficking.</title>
        <authorList>
            <person name="Du X."/>
            <person name="Kumar J."/>
            <person name="Ferguson C."/>
            <person name="Schulz T.A."/>
            <person name="Ong Y.S."/>
            <person name="Hong W."/>
            <person name="Prinz W.A."/>
            <person name="Parton R.G."/>
            <person name="Brown A.J."/>
            <person name="Yang H."/>
        </authorList>
    </citation>
    <scope>FUNCTION</scope>
    <scope>SUBCELLULAR LOCATION</scope>
    <scope>TISSUE SPECIFICITY</scope>
</reference>
<reference key="17">
    <citation type="journal article" date="2013" name="J. Proteome Res.">
        <title>Toward a comprehensive characterization of a human cancer cell phosphoproteome.</title>
        <authorList>
            <person name="Zhou H."/>
            <person name="Di Palma S."/>
            <person name="Preisinger C."/>
            <person name="Peng M."/>
            <person name="Polat A.N."/>
            <person name="Heck A.J."/>
            <person name="Mohammed S."/>
        </authorList>
    </citation>
    <scope>PHOSPHORYLATION [LARGE SCALE ANALYSIS] AT SER-747</scope>
    <scope>IDENTIFICATION BY MASS SPECTROMETRY [LARGE SCALE ANALYSIS]</scope>
    <source>
        <tissue>Cervix carcinoma</tissue>
        <tissue>Erythroleukemia</tissue>
    </source>
</reference>
<reference key="18">
    <citation type="journal article" date="2013" name="Nature">
        <title>Interactome map uncovers phosphatidylserine transport by oxysterol-binding proteins.</title>
        <authorList>
            <person name="Maeda K."/>
            <person name="Anand K."/>
            <person name="Chiapparino A."/>
            <person name="Kumar A."/>
            <person name="Poletto M."/>
            <person name="Kaksonen M."/>
            <person name="Gavin A.C."/>
        </authorList>
    </citation>
    <scope>FUNCTION</scope>
</reference>
<reference key="19">
    <citation type="journal article" date="2015" name="Science">
        <title>PI4P/phosphatidylserine countertransport at ORP5- and ORP8-mediated ER-plasma membrane contacts.</title>
        <authorList>
            <person name="Chung J."/>
            <person name="Torta F."/>
            <person name="Masai K."/>
            <person name="Lucast L."/>
            <person name="Czapla H."/>
            <person name="Tanner L.B."/>
            <person name="Narayanaswamy P."/>
            <person name="Wenk M.R."/>
            <person name="Nakatsu F."/>
            <person name="De Camilli P."/>
        </authorList>
    </citation>
    <scope>FUNCTION</scope>
    <scope>SUBCELLULAR LOCATION</scope>
    <scope>MUTAGENESIS OF LEU-389 AND 478-HIS-HIS-479</scope>
</reference>
<reference key="20">
    <citation type="journal article" date="2018" name="Cell">
        <title>Aster proteins facilitate nonvesicular plasma membrane to ER cholesterol transport in mammalian cells.</title>
        <authorList>
            <person name="Sandhu J."/>
            <person name="Li S."/>
            <person name="Fairall L."/>
            <person name="Pfisterer S.G."/>
            <person name="Gurnett J.E."/>
            <person name="Xiao X."/>
            <person name="Weston T.A."/>
            <person name="Vashi D."/>
            <person name="Ferrari A."/>
            <person name="Orozco J.L."/>
            <person name="Hartman C.L."/>
            <person name="Strugatsky D."/>
            <person name="Lee S.D."/>
            <person name="He C."/>
            <person name="Hong C."/>
            <person name="Jiang H."/>
            <person name="Bentolila L.A."/>
            <person name="Gatta A.T."/>
            <person name="Levine T.P."/>
            <person name="Ferng A."/>
            <person name="Lee R."/>
            <person name="Ford D.A."/>
            <person name="Young S.G."/>
            <person name="Ikonen E."/>
            <person name="Schwabe J.W.R."/>
            <person name="Tontonoz P."/>
        </authorList>
    </citation>
    <scope>SUBCELLULAR LOCATION</scope>
</reference>
<proteinExistence type="evidence at protein level"/>
<sequence>MKEEAFLRRRFSLCPPSSTPQKVDPRKLTRNLLLSGDNELYPLSPGKDMEPNGPSLPRDEGPPTPSSATKVPPAEYRLCNGSDKECVSPTARVTKKETLKAQKENYRQEKKRATRQLLSALTDPSVVIMADSLKIRGTLKSWTKLWCVLKPGVLLIYKTPKVGQWVGTVLLHCCELIERPSKKDGFCFKLFHPLDQSVWAVKGPKGESVGSITQPLPSSYLIFRAASESDGRCWLDALELALRCSSLLRLGTCKPGRDGEPGTSPDASPSSLCGLPASATVHPDQDLFPLNGSSLENDAFSDKSERENPEESDTETQDHSRKTESGSDQSETPGAPVRRGTTYVEQVQEELGELGEASQVETVSEENKSLMWTLLKQLRPGMDLSRVVLPTFVLEPRSFLNKLSDYYYHADLLSRAAVEEDAYSRMKLVLRWYLSGFYKKPKGIKKPYNPILGETFRCCWFHPQTDSRTFYIAEQVSHHPPVSAFHVSNRKDGFCISGSITAKSRFYGNSLSALLDGKATLTFLNRAEDYTLTMPYAHCKGILYGTMTLELGGKVTIECAKNNFQAQLEFKLKPFFGGSTSINQISGKITSGEEVLASLSGHWDRDVFIKEEGSGSSALFWTPSGEVRRQRLRQHTVPLEEQTELESERLWQHVTRAISKGDQHRATQEKFALEEAQRQRARERQESLMPWKPQLFHLDPITQEWHYRYEDHSPWDPLKDIAQFEQDGILRTLQQEAVARQTTFLGSPGPRHERSGPDQRLRKASDQPSGHSQATESSGSTPESCPELSDEEQDGDFVPGGESPCPRCRKEARRLQALHEAILSIREAQQELHRHLSAMLSSTARAAQAPTPGLLQSPRSWFLLCVFLACQLFINHILK</sequence>
<evidence type="ECO:0000250" key="1">
    <source>
        <dbReference type="UniProtKB" id="Q02201"/>
    </source>
</evidence>
<evidence type="ECO:0000250" key="2">
    <source>
        <dbReference type="UniProtKB" id="Q9ER64"/>
    </source>
</evidence>
<evidence type="ECO:0000255" key="3"/>
<evidence type="ECO:0000255" key="4">
    <source>
        <dbReference type="PROSITE-ProRule" id="PRU00145"/>
    </source>
</evidence>
<evidence type="ECO:0000256" key="5">
    <source>
        <dbReference type="SAM" id="MobiDB-lite"/>
    </source>
</evidence>
<evidence type="ECO:0000269" key="6">
    <source>
    </source>
</evidence>
<evidence type="ECO:0000269" key="7">
    <source>
    </source>
</evidence>
<evidence type="ECO:0000269" key="8">
    <source>
    </source>
</evidence>
<evidence type="ECO:0000269" key="9">
    <source>
    </source>
</evidence>
<evidence type="ECO:0000269" key="10">
    <source>
    </source>
</evidence>
<evidence type="ECO:0000269" key="11">
    <source>
    </source>
</evidence>
<evidence type="ECO:0000269" key="12">
    <source>
    </source>
</evidence>
<evidence type="ECO:0000303" key="13">
    <source>
    </source>
</evidence>
<evidence type="ECO:0000303" key="14">
    <source>
    </source>
</evidence>
<evidence type="ECO:0000303" key="15">
    <source>
    </source>
</evidence>
<evidence type="ECO:0000305" key="16"/>
<evidence type="ECO:0007744" key="17">
    <source>
    </source>
</evidence>
<evidence type="ECO:0007744" key="18">
    <source>
    </source>
</evidence>
<evidence type="ECO:0007744" key="19">
    <source>
    </source>
</evidence>
<evidence type="ECO:0007744" key="20">
    <source>
    </source>
</evidence>
<feature type="chain" id="PRO_0000100373" description="Oxysterol-binding protein-related protein 5">
    <location>
        <begin position="1"/>
        <end position="879"/>
    </location>
</feature>
<feature type="transmembrane region" description="Helical" evidence="3">
    <location>
        <begin position="860"/>
        <end position="878"/>
    </location>
</feature>
<feature type="domain" description="PH" evidence="4">
    <location>
        <begin position="126"/>
        <end position="243"/>
    </location>
</feature>
<feature type="region of interest" description="Disordered" evidence="5">
    <location>
        <begin position="1"/>
        <end position="73"/>
    </location>
</feature>
<feature type="region of interest" description="Disordered" evidence="5">
    <location>
        <begin position="254"/>
        <end position="341"/>
    </location>
</feature>
<feature type="region of interest" description="Disordered" evidence="5">
    <location>
        <begin position="742"/>
        <end position="806"/>
    </location>
</feature>
<feature type="coiled-coil region" evidence="3">
    <location>
        <begin position="93"/>
        <end position="123"/>
    </location>
</feature>
<feature type="compositionally biased region" description="Basic and acidic residues" evidence="5">
    <location>
        <begin position="300"/>
        <end position="309"/>
    </location>
</feature>
<feature type="compositionally biased region" description="Basic and acidic residues" evidence="5">
    <location>
        <begin position="316"/>
        <end position="325"/>
    </location>
</feature>
<feature type="compositionally biased region" description="Basic and acidic residues" evidence="5">
    <location>
        <begin position="750"/>
        <end position="765"/>
    </location>
</feature>
<feature type="compositionally biased region" description="Polar residues" evidence="5">
    <location>
        <begin position="766"/>
        <end position="783"/>
    </location>
</feature>
<feature type="binding site" evidence="1">
    <location>
        <begin position="384"/>
        <end position="389"/>
    </location>
    <ligand>
        <name>a 1,2-diacyl-sn-glycero-3-phospho-(1D-myo-inositol 4-phosphate)</name>
        <dbReference type="ChEBI" id="CHEBI:58178"/>
    </ligand>
</feature>
<feature type="binding site" evidence="1">
    <location>
        <begin position="384"/>
        <end position="389"/>
    </location>
    <ligand>
        <name>a 1,2-diacyl-sn-glycero-3-phospho-L-serine</name>
        <dbReference type="ChEBI" id="CHEBI:57262"/>
    </ligand>
</feature>
<feature type="binding site" evidence="1">
    <location>
        <begin position="446"/>
        <end position="449"/>
    </location>
    <ligand>
        <name>a 1,2-diacyl-sn-glycero-3-phospho-(1D-myo-inositol 4-phosphate)</name>
        <dbReference type="ChEBI" id="CHEBI:58178"/>
    </ligand>
</feature>
<feature type="binding site" evidence="1">
    <location>
        <position position="449"/>
    </location>
    <ligand>
        <name>a 1,2-diacyl-sn-glycero-3-phospho-L-serine</name>
        <dbReference type="ChEBI" id="CHEBI:57262"/>
    </ligand>
</feature>
<feature type="binding site" evidence="1">
    <location>
        <begin position="478"/>
        <end position="479"/>
    </location>
    <ligand>
        <name>a 1,2-diacyl-sn-glycero-3-phospho-(1D-myo-inositol 4-phosphate)</name>
        <dbReference type="ChEBI" id="CHEBI:58178"/>
    </ligand>
</feature>
<feature type="binding site" evidence="1">
    <location>
        <position position="504"/>
    </location>
    <ligand>
        <name>a 1,2-diacyl-sn-glycero-3-phospho-L-serine</name>
        <dbReference type="ChEBI" id="CHEBI:57262"/>
    </ligand>
</feature>
<feature type="binding site" evidence="1">
    <location>
        <position position="670"/>
    </location>
    <ligand>
        <name>a 1,2-diacyl-sn-glycero-3-phospho-(1D-myo-inositol 4-phosphate)</name>
        <dbReference type="ChEBI" id="CHEBI:58178"/>
    </ligand>
</feature>
<feature type="binding site" evidence="1">
    <location>
        <position position="674"/>
    </location>
    <ligand>
        <name>a 1,2-diacyl-sn-glycero-3-phospho-(1D-myo-inositol 4-phosphate)</name>
        <dbReference type="ChEBI" id="CHEBI:58178"/>
    </ligand>
</feature>
<feature type="binding site" evidence="1">
    <location>
        <position position="678"/>
    </location>
    <ligand>
        <name>a 1,2-diacyl-sn-glycero-3-phospho-(1D-myo-inositol 4-phosphate)</name>
        <dbReference type="ChEBI" id="CHEBI:58178"/>
    </ligand>
</feature>
<feature type="modified residue" description="Phosphoserine" evidence="2">
    <location>
        <position position="12"/>
    </location>
</feature>
<feature type="modified residue" description="Phosphoserine" evidence="17 18 19 20">
    <location>
        <position position="747"/>
    </location>
</feature>
<feature type="splice variant" id="VSP_057408" description="In isoform 3." evidence="14">
    <location>
        <begin position="1"/>
        <end position="48"/>
    </location>
</feature>
<feature type="splice variant" id="VSP_043071" description="In isoform 2." evidence="15">
    <location>
        <begin position="134"/>
        <end position="201"/>
    </location>
</feature>
<feature type="splice variant" id="VSP_057409" description="In isoform 3." evidence="14">
    <location>
        <begin position="161"/>
        <end position="201"/>
    </location>
</feature>
<feature type="sequence variant" id="VAR_060079" description="In dbSNP:rs6578323.">
    <original>T</original>
    <variation>I</variation>
    <location>
        <position position="90"/>
    </location>
</feature>
<feature type="sequence variant" id="VAR_020414" description="In dbSNP:rs2277301.">
    <original>A</original>
    <variation>T</variation>
    <location>
        <position position="774"/>
    </location>
</feature>
<feature type="mutagenesis site" description="Impaired lipid countertransport between the endoplasmic reticulum and the plasma membrane." evidence="11">
    <original>L</original>
    <variation>D</variation>
    <location>
        <position position="389"/>
    </location>
</feature>
<feature type="mutagenesis site" description="Impaired lipid countertransport between the endoplasmic reticulum and the plasma membrane." evidence="11">
    <original>HH</original>
    <variation>AA</variation>
    <location>
        <begin position="478"/>
        <end position="479"/>
    </location>
</feature>